<evidence type="ECO:0000250" key="1"/>
<evidence type="ECO:0000255" key="2">
    <source>
        <dbReference type="HAMAP-Rule" id="MF_01057"/>
    </source>
</evidence>
<evidence type="ECO:0000305" key="3"/>
<comment type="function">
    <text evidence="2">Catalyzes the formation of N(7)-methylguanine at position 46 (m7G46) in tRNA.</text>
</comment>
<comment type="catalytic activity">
    <reaction evidence="2">
        <text>guanosine(46) in tRNA + S-adenosyl-L-methionine = N(7)-methylguanosine(46) in tRNA + S-adenosyl-L-homocysteine</text>
        <dbReference type="Rhea" id="RHEA:42708"/>
        <dbReference type="Rhea" id="RHEA-COMP:10188"/>
        <dbReference type="Rhea" id="RHEA-COMP:10189"/>
        <dbReference type="ChEBI" id="CHEBI:57856"/>
        <dbReference type="ChEBI" id="CHEBI:59789"/>
        <dbReference type="ChEBI" id="CHEBI:74269"/>
        <dbReference type="ChEBI" id="CHEBI:74480"/>
        <dbReference type="EC" id="2.1.1.33"/>
    </reaction>
</comment>
<comment type="pathway">
    <text evidence="2">tRNA modification; N(7)-methylguanine-tRNA biosynthesis.</text>
</comment>
<comment type="similarity">
    <text evidence="2">Belongs to the class I-like SAM-binding methyltransferase superfamily. TrmB family.</text>
</comment>
<comment type="sequence caution" evidence="3">
    <conflict type="erroneous initiation">
        <sequence resource="EMBL-CDS" id="ABD53624"/>
    </conflict>
</comment>
<reference key="1">
    <citation type="submission" date="2006-02" db="EMBL/GenBank/DDBJ databases">
        <title>Complete sequence of chromosome of Jannaschia sp. CCS1.</title>
        <authorList>
            <consortium name="US DOE Joint Genome Institute"/>
            <person name="Copeland A."/>
            <person name="Lucas S."/>
            <person name="Lapidus A."/>
            <person name="Barry K."/>
            <person name="Detter J.C."/>
            <person name="Glavina del Rio T."/>
            <person name="Hammon N."/>
            <person name="Israni S."/>
            <person name="Pitluck S."/>
            <person name="Brettin T."/>
            <person name="Bruce D."/>
            <person name="Han C."/>
            <person name="Tapia R."/>
            <person name="Gilna P."/>
            <person name="Chertkov O."/>
            <person name="Saunders E."/>
            <person name="Schmutz J."/>
            <person name="Larimer F."/>
            <person name="Land M."/>
            <person name="Kyrpides N."/>
            <person name="Lykidis A."/>
            <person name="Moran M.A."/>
            <person name="Belas R."/>
            <person name="Ye W."/>
            <person name="Buchan A."/>
            <person name="Gonzalez J.M."/>
            <person name="Schell M.A."/>
            <person name="Richardson P."/>
        </authorList>
    </citation>
    <scope>NUCLEOTIDE SEQUENCE [LARGE SCALE GENOMIC DNA]</scope>
    <source>
        <strain>CCS1</strain>
    </source>
</reference>
<keyword id="KW-0489">Methyltransferase</keyword>
<keyword id="KW-1185">Reference proteome</keyword>
<keyword id="KW-0949">S-adenosyl-L-methionine</keyword>
<keyword id="KW-0808">Transferase</keyword>
<keyword id="KW-0819">tRNA processing</keyword>
<proteinExistence type="inferred from homology"/>
<feature type="chain" id="PRO_0000288160" description="tRNA (guanine-N(7)-)-methyltransferase">
    <location>
        <begin position="1"/>
        <end position="237"/>
    </location>
</feature>
<feature type="active site" evidence="1">
    <location>
        <position position="141"/>
    </location>
</feature>
<feature type="binding site" evidence="2">
    <location>
        <position position="67"/>
    </location>
    <ligand>
        <name>S-adenosyl-L-methionine</name>
        <dbReference type="ChEBI" id="CHEBI:59789"/>
    </ligand>
</feature>
<feature type="binding site" evidence="2">
    <location>
        <position position="92"/>
    </location>
    <ligand>
        <name>S-adenosyl-L-methionine</name>
        <dbReference type="ChEBI" id="CHEBI:59789"/>
    </ligand>
</feature>
<feature type="binding site" evidence="2">
    <location>
        <position position="119"/>
    </location>
    <ligand>
        <name>S-adenosyl-L-methionine</name>
        <dbReference type="ChEBI" id="CHEBI:59789"/>
    </ligand>
</feature>
<feature type="binding site" evidence="2">
    <location>
        <position position="141"/>
    </location>
    <ligand>
        <name>S-adenosyl-L-methionine</name>
        <dbReference type="ChEBI" id="CHEBI:59789"/>
    </ligand>
</feature>
<feature type="binding site" evidence="2">
    <location>
        <position position="145"/>
    </location>
    <ligand>
        <name>substrate</name>
    </ligand>
</feature>
<feature type="binding site" evidence="2">
    <location>
        <position position="177"/>
    </location>
    <ligand>
        <name>substrate</name>
    </ligand>
</feature>
<feature type="binding site" evidence="2">
    <location>
        <begin position="214"/>
        <end position="217"/>
    </location>
    <ligand>
        <name>substrate</name>
    </ligand>
</feature>
<gene>
    <name evidence="2" type="primary">trmB</name>
    <name type="ordered locus">Jann_0707</name>
</gene>
<dbReference type="EC" id="2.1.1.33" evidence="2"/>
<dbReference type="EMBL" id="CP000264">
    <property type="protein sequence ID" value="ABD53624.1"/>
    <property type="status" value="ALT_INIT"/>
    <property type="molecule type" value="Genomic_DNA"/>
</dbReference>
<dbReference type="RefSeq" id="WP_166486047.1">
    <property type="nucleotide sequence ID" value="NC_007802.1"/>
</dbReference>
<dbReference type="SMR" id="Q28UI8"/>
<dbReference type="STRING" id="290400.Jann_0707"/>
<dbReference type="KEGG" id="jan:Jann_0707"/>
<dbReference type="eggNOG" id="COG0220">
    <property type="taxonomic scope" value="Bacteria"/>
</dbReference>
<dbReference type="HOGENOM" id="CLU_050910_0_3_5"/>
<dbReference type="UniPathway" id="UPA00989"/>
<dbReference type="Proteomes" id="UP000008326">
    <property type="component" value="Chromosome"/>
</dbReference>
<dbReference type="GO" id="GO:0043527">
    <property type="term" value="C:tRNA methyltransferase complex"/>
    <property type="evidence" value="ECO:0007669"/>
    <property type="project" value="TreeGrafter"/>
</dbReference>
<dbReference type="GO" id="GO:0008176">
    <property type="term" value="F:tRNA (guanine(46)-N7)-methyltransferase activity"/>
    <property type="evidence" value="ECO:0007669"/>
    <property type="project" value="UniProtKB-UniRule"/>
</dbReference>
<dbReference type="Gene3D" id="3.40.50.150">
    <property type="entry name" value="Vaccinia Virus protein VP39"/>
    <property type="match status" value="1"/>
</dbReference>
<dbReference type="HAMAP" id="MF_01057">
    <property type="entry name" value="tRNA_methyltr_TrmB"/>
    <property type="match status" value="1"/>
</dbReference>
<dbReference type="InterPro" id="IPR029063">
    <property type="entry name" value="SAM-dependent_MTases_sf"/>
</dbReference>
<dbReference type="InterPro" id="IPR003358">
    <property type="entry name" value="tRNA_(Gua-N-7)_MeTrfase_Trmb"/>
</dbReference>
<dbReference type="InterPro" id="IPR055361">
    <property type="entry name" value="tRNA_methyltr_TrmB_bact"/>
</dbReference>
<dbReference type="PANTHER" id="PTHR23417">
    <property type="entry name" value="3-DEOXY-D-MANNO-OCTULOSONIC-ACID TRANSFERASE/TRNA GUANINE-N 7 - -METHYLTRANSFERASE"/>
    <property type="match status" value="1"/>
</dbReference>
<dbReference type="PANTHER" id="PTHR23417:SF14">
    <property type="entry name" value="PENTACOTRIPEPTIDE-REPEAT REGION OF PRORP DOMAIN-CONTAINING PROTEIN"/>
    <property type="match status" value="1"/>
</dbReference>
<dbReference type="Pfam" id="PF02390">
    <property type="entry name" value="Methyltransf_4"/>
    <property type="match status" value="1"/>
</dbReference>
<dbReference type="SUPFAM" id="SSF53335">
    <property type="entry name" value="S-adenosyl-L-methionine-dependent methyltransferases"/>
    <property type="match status" value="1"/>
</dbReference>
<dbReference type="PROSITE" id="PS51625">
    <property type="entry name" value="SAM_MT_TRMB"/>
    <property type="match status" value="1"/>
</dbReference>
<name>TRMB_JANSC</name>
<sequence length="237" mass="27122">MTDPHPNRPHRNFYGRRKGHDLRDSQERYLAEDLAKLSPGAVDWDVNPDRTPLDLKERFGGKDIWLEVGFGGGEHLVHQAASNPDVAIIGCEPYINGVAMLLGKIRAAGVGNLAVYPGDARDLFDVLPKGSVAKAFLLYPDPWPKARHHRRRFVTTEHLEPLHRAMRPGAEFRVATDIEDYVRQTMEEVPKAGFEWLAEAASDWREPWCDWVSTRYEQKALREGRVPHYMTFQKRSL</sequence>
<protein>
    <recommendedName>
        <fullName evidence="2">tRNA (guanine-N(7)-)-methyltransferase</fullName>
        <ecNumber evidence="2">2.1.1.33</ecNumber>
    </recommendedName>
    <alternativeName>
        <fullName evidence="2">tRNA (guanine(46)-N(7))-methyltransferase</fullName>
    </alternativeName>
    <alternativeName>
        <fullName evidence="2">tRNA(m7G46)-methyltransferase</fullName>
    </alternativeName>
</protein>
<accession>Q28UI8</accession>
<organism>
    <name type="scientific">Jannaschia sp. (strain CCS1)</name>
    <dbReference type="NCBI Taxonomy" id="290400"/>
    <lineage>
        <taxon>Bacteria</taxon>
        <taxon>Pseudomonadati</taxon>
        <taxon>Pseudomonadota</taxon>
        <taxon>Alphaproteobacteria</taxon>
        <taxon>Rhodobacterales</taxon>
        <taxon>Roseobacteraceae</taxon>
        <taxon>Jannaschia</taxon>
    </lineage>
</organism>